<sequence>MKKPYRKISDYAIVGGLSALVMVSIVGCKSNADDKPKEQSSLSQSVQKGAFVILEEQKDKSYKVVEEYPSSRTHIIVRDLQGNERVLSNEEIQKLIKEEEAKIDNGTSKLVQPNNGGGSNEGSGFGLGSAILGSAAGAILGSYIGNKLFNNPNYQQNAQRTYKSPQAYQRSQNSFSKSAPSASSMGGASKGQSGFFGSSRPTSSPAVSSGTRGFNS</sequence>
<feature type="signal peptide" evidence="1">
    <location>
        <begin position="1"/>
        <end position="27"/>
    </location>
</feature>
<feature type="chain" id="PRO_1000145632" description="UPF0323 lipoprotein HPG27_212">
    <location>
        <begin position="28"/>
        <end position="216"/>
    </location>
</feature>
<feature type="region of interest" description="Disordered" evidence="2">
    <location>
        <begin position="159"/>
        <end position="216"/>
    </location>
</feature>
<feature type="compositionally biased region" description="Polar residues" evidence="2">
    <location>
        <begin position="159"/>
        <end position="170"/>
    </location>
</feature>
<feature type="compositionally biased region" description="Low complexity" evidence="2">
    <location>
        <begin position="171"/>
        <end position="209"/>
    </location>
</feature>
<feature type="lipid moiety-binding region" description="N-palmitoyl cysteine" evidence="1">
    <location>
        <position position="28"/>
    </location>
</feature>
<feature type="lipid moiety-binding region" description="S-diacylglycerol cysteine" evidence="1">
    <location>
        <position position="28"/>
    </location>
</feature>
<comment type="subcellular location">
    <subcellularLocation>
        <location evidence="1">Cell membrane</location>
        <topology evidence="1">Lipid-anchor</topology>
    </subcellularLocation>
</comment>
<comment type="similarity">
    <text evidence="1">Belongs to the UPF0323 family.</text>
</comment>
<protein>
    <recommendedName>
        <fullName evidence="1">UPF0323 lipoprotein HPG27_212</fullName>
    </recommendedName>
</protein>
<keyword id="KW-1003">Cell membrane</keyword>
<keyword id="KW-0449">Lipoprotein</keyword>
<keyword id="KW-0472">Membrane</keyword>
<keyword id="KW-0564">Palmitate</keyword>
<keyword id="KW-1185">Reference proteome</keyword>
<keyword id="KW-0732">Signal</keyword>
<name>Y212_HELPG</name>
<gene>
    <name type="ordered locus">HPG27_212</name>
</gene>
<organism>
    <name type="scientific">Helicobacter pylori (strain G27)</name>
    <dbReference type="NCBI Taxonomy" id="563041"/>
    <lineage>
        <taxon>Bacteria</taxon>
        <taxon>Pseudomonadati</taxon>
        <taxon>Campylobacterota</taxon>
        <taxon>Epsilonproteobacteria</taxon>
        <taxon>Campylobacterales</taxon>
        <taxon>Helicobacteraceae</taxon>
        <taxon>Helicobacter</taxon>
    </lineage>
</organism>
<proteinExistence type="inferred from homology"/>
<reference key="1">
    <citation type="journal article" date="2009" name="J. Bacteriol.">
        <title>The complete genome sequence of Helicobacter pylori strain G27.</title>
        <authorList>
            <person name="Baltrus D.A."/>
            <person name="Amieva M.R."/>
            <person name="Covacci A."/>
            <person name="Lowe T.M."/>
            <person name="Merrell D.S."/>
            <person name="Ottemann K.M."/>
            <person name="Stein M."/>
            <person name="Salama N.R."/>
            <person name="Guillemin K."/>
        </authorList>
    </citation>
    <scope>NUCLEOTIDE SEQUENCE [LARGE SCALE GENOMIC DNA]</scope>
    <source>
        <strain>G27</strain>
    </source>
</reference>
<accession>B5Z9Z9</accession>
<dbReference type="EMBL" id="CP001173">
    <property type="protein sequence ID" value="ACI26979.1"/>
    <property type="molecule type" value="Genomic_DNA"/>
</dbReference>
<dbReference type="RefSeq" id="WP_000743511.1">
    <property type="nucleotide sequence ID" value="NC_011333.1"/>
</dbReference>
<dbReference type="KEGG" id="hpg:HPG27_212"/>
<dbReference type="HOGENOM" id="CLU_111520_0_0_7"/>
<dbReference type="Proteomes" id="UP000001735">
    <property type="component" value="Chromosome"/>
</dbReference>
<dbReference type="GO" id="GO:0005886">
    <property type="term" value="C:plasma membrane"/>
    <property type="evidence" value="ECO:0007669"/>
    <property type="project" value="UniProtKB-SubCell"/>
</dbReference>
<dbReference type="HAMAP" id="MF_01421">
    <property type="entry name" value="UPF0323"/>
    <property type="match status" value="1"/>
</dbReference>
<dbReference type="InterPro" id="IPR020913">
    <property type="entry name" value="UPF0323"/>
</dbReference>
<dbReference type="NCBIfam" id="NF003146">
    <property type="entry name" value="PRK04081.1"/>
    <property type="match status" value="1"/>
</dbReference>
<dbReference type="PROSITE" id="PS51257">
    <property type="entry name" value="PROKAR_LIPOPROTEIN"/>
    <property type="match status" value="1"/>
</dbReference>
<evidence type="ECO:0000255" key="1">
    <source>
        <dbReference type="HAMAP-Rule" id="MF_01421"/>
    </source>
</evidence>
<evidence type="ECO:0000256" key="2">
    <source>
        <dbReference type="SAM" id="MobiDB-lite"/>
    </source>
</evidence>